<evidence type="ECO:0000255" key="1">
    <source>
        <dbReference type="HAMAP-Rule" id="MF_00362"/>
    </source>
</evidence>
<evidence type="ECO:0000305" key="2"/>
<organism>
    <name type="scientific">Alkalilimnicola ehrlichii (strain ATCC BAA-1101 / DSM 17681 / MLHE-1)</name>
    <dbReference type="NCBI Taxonomy" id="187272"/>
    <lineage>
        <taxon>Bacteria</taxon>
        <taxon>Pseudomonadati</taxon>
        <taxon>Pseudomonadota</taxon>
        <taxon>Gammaproteobacteria</taxon>
        <taxon>Chromatiales</taxon>
        <taxon>Ectothiorhodospiraceae</taxon>
        <taxon>Alkalilimnicola</taxon>
    </lineage>
</organism>
<reference key="1">
    <citation type="submission" date="2006-08" db="EMBL/GenBank/DDBJ databases">
        <title>Complete sequence of Alkalilimnicola ehrilichei MLHE-1.</title>
        <authorList>
            <person name="Copeland A."/>
            <person name="Lucas S."/>
            <person name="Lapidus A."/>
            <person name="Barry K."/>
            <person name="Detter J.C."/>
            <person name="Glavina del Rio T."/>
            <person name="Hammon N."/>
            <person name="Israni S."/>
            <person name="Dalin E."/>
            <person name="Tice H."/>
            <person name="Pitluck S."/>
            <person name="Sims D."/>
            <person name="Brettin T."/>
            <person name="Bruce D."/>
            <person name="Han C."/>
            <person name="Tapia R."/>
            <person name="Gilna P."/>
            <person name="Schmutz J."/>
            <person name="Larimer F."/>
            <person name="Land M."/>
            <person name="Hauser L."/>
            <person name="Kyrpides N."/>
            <person name="Mikhailova N."/>
            <person name="Oremland R.S."/>
            <person name="Hoeft S.E."/>
            <person name="Switzer-Blum J."/>
            <person name="Kulp T."/>
            <person name="King G."/>
            <person name="Tabita R."/>
            <person name="Witte B."/>
            <person name="Santini J.M."/>
            <person name="Basu P."/>
            <person name="Hollibaugh J.T."/>
            <person name="Xie G."/>
            <person name="Stolz J.F."/>
            <person name="Richardson P."/>
        </authorList>
    </citation>
    <scope>NUCLEOTIDE SEQUENCE [LARGE SCALE GENOMIC DNA]</scope>
    <source>
        <strain>ATCC BAA-1101 / DSM 17681 / MLHE-1</strain>
    </source>
</reference>
<comment type="function">
    <text evidence="1">Forms part of the ribosomal stalk, playing a central role in the interaction of the ribosome with GTP-bound translation factors.</text>
</comment>
<comment type="subunit">
    <text evidence="1">Part of the ribosomal stalk of the 50S ribosomal subunit. The N-terminus interacts with L11 and the large rRNA to form the base of the stalk. The C-terminus forms an elongated spine to which L12 dimers bind in a sequential fashion forming a multimeric L10(L12)X complex.</text>
</comment>
<comment type="similarity">
    <text evidence="1">Belongs to the universal ribosomal protein uL10 family.</text>
</comment>
<feature type="chain" id="PRO_1000005463" description="Large ribosomal subunit protein uL10">
    <location>
        <begin position="1"/>
        <end position="175"/>
    </location>
</feature>
<name>RL10_ALKEH</name>
<accession>Q0ABI4</accession>
<gene>
    <name evidence="1" type="primary">rplJ</name>
    <name type="ordered locus">Mlg_0449</name>
</gene>
<proteinExistence type="inferred from homology"/>
<protein>
    <recommendedName>
        <fullName evidence="1">Large ribosomal subunit protein uL10</fullName>
    </recommendedName>
    <alternativeName>
        <fullName evidence="2">50S ribosomal protein L10</fullName>
    </alternativeName>
</protein>
<dbReference type="EMBL" id="CP000453">
    <property type="protein sequence ID" value="ABI55803.1"/>
    <property type="molecule type" value="Genomic_DNA"/>
</dbReference>
<dbReference type="RefSeq" id="WP_011628199.1">
    <property type="nucleotide sequence ID" value="NC_008340.1"/>
</dbReference>
<dbReference type="SMR" id="Q0ABI4"/>
<dbReference type="KEGG" id="aeh:Mlg_0449"/>
<dbReference type="eggNOG" id="COG0244">
    <property type="taxonomic scope" value="Bacteria"/>
</dbReference>
<dbReference type="HOGENOM" id="CLU_092227_0_1_6"/>
<dbReference type="OrthoDB" id="9808307at2"/>
<dbReference type="Proteomes" id="UP000001962">
    <property type="component" value="Chromosome"/>
</dbReference>
<dbReference type="GO" id="GO:0015934">
    <property type="term" value="C:large ribosomal subunit"/>
    <property type="evidence" value="ECO:0007669"/>
    <property type="project" value="InterPro"/>
</dbReference>
<dbReference type="GO" id="GO:0070180">
    <property type="term" value="F:large ribosomal subunit rRNA binding"/>
    <property type="evidence" value="ECO:0007669"/>
    <property type="project" value="UniProtKB-UniRule"/>
</dbReference>
<dbReference type="GO" id="GO:0003735">
    <property type="term" value="F:structural constituent of ribosome"/>
    <property type="evidence" value="ECO:0007669"/>
    <property type="project" value="InterPro"/>
</dbReference>
<dbReference type="GO" id="GO:0006412">
    <property type="term" value="P:translation"/>
    <property type="evidence" value="ECO:0007669"/>
    <property type="project" value="UniProtKB-UniRule"/>
</dbReference>
<dbReference type="CDD" id="cd05797">
    <property type="entry name" value="Ribosomal_L10"/>
    <property type="match status" value="1"/>
</dbReference>
<dbReference type="Gene3D" id="3.30.70.1730">
    <property type="match status" value="1"/>
</dbReference>
<dbReference type="Gene3D" id="6.10.250.2350">
    <property type="match status" value="1"/>
</dbReference>
<dbReference type="HAMAP" id="MF_00362">
    <property type="entry name" value="Ribosomal_uL10"/>
    <property type="match status" value="1"/>
</dbReference>
<dbReference type="InterPro" id="IPR001790">
    <property type="entry name" value="Ribosomal_uL10"/>
</dbReference>
<dbReference type="InterPro" id="IPR043141">
    <property type="entry name" value="Ribosomal_uL10-like_sf"/>
</dbReference>
<dbReference type="InterPro" id="IPR022973">
    <property type="entry name" value="Ribosomal_uL10_bac"/>
</dbReference>
<dbReference type="InterPro" id="IPR047865">
    <property type="entry name" value="Ribosomal_uL10_bac_type"/>
</dbReference>
<dbReference type="InterPro" id="IPR002363">
    <property type="entry name" value="Ribosomal_uL10_CS_bac"/>
</dbReference>
<dbReference type="NCBIfam" id="NF000955">
    <property type="entry name" value="PRK00099.1-1"/>
    <property type="match status" value="1"/>
</dbReference>
<dbReference type="PANTHER" id="PTHR11560">
    <property type="entry name" value="39S RIBOSOMAL PROTEIN L10, MITOCHONDRIAL"/>
    <property type="match status" value="1"/>
</dbReference>
<dbReference type="Pfam" id="PF00466">
    <property type="entry name" value="Ribosomal_L10"/>
    <property type="match status" value="1"/>
</dbReference>
<dbReference type="SUPFAM" id="SSF160369">
    <property type="entry name" value="Ribosomal protein L10-like"/>
    <property type="match status" value="1"/>
</dbReference>
<dbReference type="PROSITE" id="PS01109">
    <property type="entry name" value="RIBOSOMAL_L10"/>
    <property type="match status" value="1"/>
</dbReference>
<sequence>MGLSLEQKKAMVQEVAAVAKEAHSAVGAEYRGLTAGQMDALRQQARENGVYLRVVKNRLAKRAVEGTEFECMQSELTGPLLLAFSLEDPGAAARVIKAYSKEHEALQTRLVAVGGQVYPASELERLASLPTREEALAMLLATMKAPVQKLATTLNEVPGKLVRTVAAVKDAKQAA</sequence>
<keyword id="KW-1185">Reference proteome</keyword>
<keyword id="KW-0687">Ribonucleoprotein</keyword>
<keyword id="KW-0689">Ribosomal protein</keyword>
<keyword id="KW-0694">RNA-binding</keyword>
<keyword id="KW-0699">rRNA-binding</keyword>